<proteinExistence type="inferred from homology"/>
<sequence>MARKYPLDKFRNFGIMAHIDAGKTTTTERILFYTGINHKIGETHDGASTMDWMVQEQERGITITSAATTCAWKEHELNIIDTPGHVDFTVEVERSLRVLDGAVTVLDAKSGVEPQTETVWRQADKYGVPRMIYVNKMDATGADFFRCISTVRDRLKGNAVPIQIPIGSEENFQGMIDLIRNVAILFYDDLGKDMREEAIPAEYAEKAEEYRAAMIEAIAEADEELMMKYLDGEEITEEELKAGLRKATIANEIYPCICGSSYKNKGVQQMIDGVVDYLPSPLDIPAVKGTNLEGEEAERNAADGEPLSALAFKIATDPFVGKLAYTRIYSGIMESGSYVLNSTKGKKERIGRLVKMHSNSRQEVESLEAGELGAVIGLKNTSTGDTLCSEKDPIILESMEFPEPVISVAIEPKTKAAQEKMGMALAKLAEEDPTFKTWTNEETGQTIIAGMGELHLDIIVDRLKREFKVECNVGAPQVAYKETIRKAVKAEAKYAKQSGGKGQYGHAVIEMEPTEGEYVFENAIVGGAIPREYIPAVDNGIQEASLNGIIAGYNVINFKVRLVHGSYHEVDSSEMAFKIAGSMAFKNAMSKADPVLLEPMMKVEITVPEEYMGDVIGDVNSRRGRMEGMEAVNGAQVIRAFVPLSEMFGYATSLRSRTQGRGVYSMVFDHYEEVPKSIQEQVAGNKAK</sequence>
<name>EFG_CLOBA</name>
<reference key="1">
    <citation type="submission" date="2008-05" db="EMBL/GenBank/DDBJ databases">
        <title>Complete genome sequence of Clostridium botulinum E3 str. Alaska E43.</title>
        <authorList>
            <person name="Brinkac L.M."/>
            <person name="Brown J.L."/>
            <person name="Bruce D."/>
            <person name="Detter C."/>
            <person name="Munk C."/>
            <person name="Smith L.A."/>
            <person name="Smith T.J."/>
            <person name="Sutton G."/>
            <person name="Brettin T.S."/>
        </authorList>
    </citation>
    <scope>NUCLEOTIDE SEQUENCE [LARGE SCALE GENOMIC DNA]</scope>
    <source>
        <strain>Alaska E43 / Type E3</strain>
    </source>
</reference>
<gene>
    <name evidence="1" type="primary">fusA</name>
    <name type="ordered locus">CLH_0234</name>
</gene>
<protein>
    <recommendedName>
        <fullName evidence="1">Elongation factor G</fullName>
        <shortName evidence="1">EF-G</shortName>
    </recommendedName>
</protein>
<evidence type="ECO:0000255" key="1">
    <source>
        <dbReference type="HAMAP-Rule" id="MF_00054"/>
    </source>
</evidence>
<organism>
    <name type="scientific">Clostridium botulinum (strain Alaska E43 / Type E3)</name>
    <dbReference type="NCBI Taxonomy" id="508767"/>
    <lineage>
        <taxon>Bacteria</taxon>
        <taxon>Bacillati</taxon>
        <taxon>Bacillota</taxon>
        <taxon>Clostridia</taxon>
        <taxon>Eubacteriales</taxon>
        <taxon>Clostridiaceae</taxon>
        <taxon>Clostridium</taxon>
    </lineage>
</organism>
<comment type="function">
    <text evidence="1">Catalyzes the GTP-dependent ribosomal translocation step during translation elongation. During this step, the ribosome changes from the pre-translocational (PRE) to the post-translocational (POST) state as the newly formed A-site-bound peptidyl-tRNA and P-site-bound deacylated tRNA move to the P and E sites, respectively. Catalyzes the coordinated movement of the two tRNA molecules, the mRNA and conformational changes in the ribosome.</text>
</comment>
<comment type="subcellular location">
    <subcellularLocation>
        <location evidence="1">Cytoplasm</location>
    </subcellularLocation>
</comment>
<comment type="similarity">
    <text evidence="1">Belongs to the TRAFAC class translation factor GTPase superfamily. Classic translation factor GTPase family. EF-G/EF-2 subfamily.</text>
</comment>
<keyword id="KW-0963">Cytoplasm</keyword>
<keyword id="KW-0251">Elongation factor</keyword>
<keyword id="KW-0342">GTP-binding</keyword>
<keyword id="KW-0547">Nucleotide-binding</keyword>
<keyword id="KW-0648">Protein biosynthesis</keyword>
<accession>B2UYA7</accession>
<dbReference type="EMBL" id="CP001078">
    <property type="protein sequence ID" value="ACD51485.1"/>
    <property type="molecule type" value="Genomic_DNA"/>
</dbReference>
<dbReference type="RefSeq" id="WP_003371458.1">
    <property type="nucleotide sequence ID" value="NC_010723.1"/>
</dbReference>
<dbReference type="SMR" id="B2UYA7"/>
<dbReference type="KEGG" id="cbt:CLH_0234"/>
<dbReference type="HOGENOM" id="CLU_002794_4_1_9"/>
<dbReference type="GO" id="GO:0005737">
    <property type="term" value="C:cytoplasm"/>
    <property type="evidence" value="ECO:0007669"/>
    <property type="project" value="UniProtKB-SubCell"/>
</dbReference>
<dbReference type="GO" id="GO:0005525">
    <property type="term" value="F:GTP binding"/>
    <property type="evidence" value="ECO:0007669"/>
    <property type="project" value="UniProtKB-UniRule"/>
</dbReference>
<dbReference type="GO" id="GO:0003924">
    <property type="term" value="F:GTPase activity"/>
    <property type="evidence" value="ECO:0007669"/>
    <property type="project" value="InterPro"/>
</dbReference>
<dbReference type="GO" id="GO:0003746">
    <property type="term" value="F:translation elongation factor activity"/>
    <property type="evidence" value="ECO:0007669"/>
    <property type="project" value="UniProtKB-UniRule"/>
</dbReference>
<dbReference type="GO" id="GO:0032790">
    <property type="term" value="P:ribosome disassembly"/>
    <property type="evidence" value="ECO:0007669"/>
    <property type="project" value="TreeGrafter"/>
</dbReference>
<dbReference type="CDD" id="cd01886">
    <property type="entry name" value="EF-G"/>
    <property type="match status" value="1"/>
</dbReference>
<dbReference type="CDD" id="cd16262">
    <property type="entry name" value="EFG_III"/>
    <property type="match status" value="1"/>
</dbReference>
<dbReference type="CDD" id="cd01434">
    <property type="entry name" value="EFG_mtEFG1_IV"/>
    <property type="match status" value="1"/>
</dbReference>
<dbReference type="CDD" id="cd03713">
    <property type="entry name" value="EFG_mtEFG_C"/>
    <property type="match status" value="1"/>
</dbReference>
<dbReference type="CDD" id="cd04088">
    <property type="entry name" value="EFG_mtEFG_II"/>
    <property type="match status" value="1"/>
</dbReference>
<dbReference type="FunFam" id="2.40.30.10:FF:000006">
    <property type="entry name" value="Elongation factor G"/>
    <property type="match status" value="1"/>
</dbReference>
<dbReference type="FunFam" id="3.30.230.10:FF:000003">
    <property type="entry name" value="Elongation factor G"/>
    <property type="match status" value="1"/>
</dbReference>
<dbReference type="FunFam" id="3.30.70.240:FF:000001">
    <property type="entry name" value="Elongation factor G"/>
    <property type="match status" value="1"/>
</dbReference>
<dbReference type="FunFam" id="3.30.70.870:FF:000001">
    <property type="entry name" value="Elongation factor G"/>
    <property type="match status" value="1"/>
</dbReference>
<dbReference type="FunFam" id="3.40.50.300:FF:000029">
    <property type="entry name" value="Elongation factor G"/>
    <property type="match status" value="1"/>
</dbReference>
<dbReference type="Gene3D" id="3.30.230.10">
    <property type="match status" value="1"/>
</dbReference>
<dbReference type="Gene3D" id="3.30.70.240">
    <property type="match status" value="1"/>
</dbReference>
<dbReference type="Gene3D" id="3.30.70.870">
    <property type="entry name" value="Elongation Factor G (Translational Gtpase), domain 3"/>
    <property type="match status" value="1"/>
</dbReference>
<dbReference type="Gene3D" id="3.40.50.300">
    <property type="entry name" value="P-loop containing nucleotide triphosphate hydrolases"/>
    <property type="match status" value="1"/>
</dbReference>
<dbReference type="Gene3D" id="2.40.30.10">
    <property type="entry name" value="Translation factors"/>
    <property type="match status" value="1"/>
</dbReference>
<dbReference type="HAMAP" id="MF_00054_B">
    <property type="entry name" value="EF_G_EF_2_B"/>
    <property type="match status" value="1"/>
</dbReference>
<dbReference type="InterPro" id="IPR053905">
    <property type="entry name" value="EF-G-like_DII"/>
</dbReference>
<dbReference type="InterPro" id="IPR041095">
    <property type="entry name" value="EFG_II"/>
</dbReference>
<dbReference type="InterPro" id="IPR009022">
    <property type="entry name" value="EFG_III"/>
</dbReference>
<dbReference type="InterPro" id="IPR035647">
    <property type="entry name" value="EFG_III/V"/>
</dbReference>
<dbReference type="InterPro" id="IPR047872">
    <property type="entry name" value="EFG_IV"/>
</dbReference>
<dbReference type="InterPro" id="IPR035649">
    <property type="entry name" value="EFG_V"/>
</dbReference>
<dbReference type="InterPro" id="IPR000640">
    <property type="entry name" value="EFG_V-like"/>
</dbReference>
<dbReference type="InterPro" id="IPR031157">
    <property type="entry name" value="G_TR_CS"/>
</dbReference>
<dbReference type="InterPro" id="IPR027417">
    <property type="entry name" value="P-loop_NTPase"/>
</dbReference>
<dbReference type="InterPro" id="IPR020568">
    <property type="entry name" value="Ribosomal_Su5_D2-typ_SF"/>
</dbReference>
<dbReference type="InterPro" id="IPR014721">
    <property type="entry name" value="Ribsml_uS5_D2-typ_fold_subgr"/>
</dbReference>
<dbReference type="InterPro" id="IPR005225">
    <property type="entry name" value="Small_GTP-bd"/>
</dbReference>
<dbReference type="InterPro" id="IPR000795">
    <property type="entry name" value="T_Tr_GTP-bd_dom"/>
</dbReference>
<dbReference type="InterPro" id="IPR009000">
    <property type="entry name" value="Transl_B-barrel_sf"/>
</dbReference>
<dbReference type="InterPro" id="IPR004540">
    <property type="entry name" value="Transl_elong_EFG/EF2"/>
</dbReference>
<dbReference type="InterPro" id="IPR005517">
    <property type="entry name" value="Transl_elong_EFG/EF2_IV"/>
</dbReference>
<dbReference type="NCBIfam" id="TIGR00484">
    <property type="entry name" value="EF-G"/>
    <property type="match status" value="1"/>
</dbReference>
<dbReference type="NCBIfam" id="NF009381">
    <property type="entry name" value="PRK12740.1-5"/>
    <property type="match status" value="1"/>
</dbReference>
<dbReference type="NCBIfam" id="TIGR00231">
    <property type="entry name" value="small_GTP"/>
    <property type="match status" value="1"/>
</dbReference>
<dbReference type="PANTHER" id="PTHR43261:SF1">
    <property type="entry name" value="RIBOSOME-RELEASING FACTOR 2, MITOCHONDRIAL"/>
    <property type="match status" value="1"/>
</dbReference>
<dbReference type="PANTHER" id="PTHR43261">
    <property type="entry name" value="TRANSLATION ELONGATION FACTOR G-RELATED"/>
    <property type="match status" value="1"/>
</dbReference>
<dbReference type="Pfam" id="PF22042">
    <property type="entry name" value="EF-G_D2"/>
    <property type="match status" value="1"/>
</dbReference>
<dbReference type="Pfam" id="PF00679">
    <property type="entry name" value="EFG_C"/>
    <property type="match status" value="1"/>
</dbReference>
<dbReference type="Pfam" id="PF14492">
    <property type="entry name" value="EFG_III"/>
    <property type="match status" value="1"/>
</dbReference>
<dbReference type="Pfam" id="PF03764">
    <property type="entry name" value="EFG_IV"/>
    <property type="match status" value="1"/>
</dbReference>
<dbReference type="Pfam" id="PF00009">
    <property type="entry name" value="GTP_EFTU"/>
    <property type="match status" value="1"/>
</dbReference>
<dbReference type="PRINTS" id="PR00315">
    <property type="entry name" value="ELONGATNFCT"/>
</dbReference>
<dbReference type="SMART" id="SM00838">
    <property type="entry name" value="EFG_C"/>
    <property type="match status" value="1"/>
</dbReference>
<dbReference type="SMART" id="SM00889">
    <property type="entry name" value="EFG_IV"/>
    <property type="match status" value="1"/>
</dbReference>
<dbReference type="SUPFAM" id="SSF54980">
    <property type="entry name" value="EF-G C-terminal domain-like"/>
    <property type="match status" value="2"/>
</dbReference>
<dbReference type="SUPFAM" id="SSF52540">
    <property type="entry name" value="P-loop containing nucleoside triphosphate hydrolases"/>
    <property type="match status" value="1"/>
</dbReference>
<dbReference type="SUPFAM" id="SSF54211">
    <property type="entry name" value="Ribosomal protein S5 domain 2-like"/>
    <property type="match status" value="1"/>
</dbReference>
<dbReference type="SUPFAM" id="SSF50447">
    <property type="entry name" value="Translation proteins"/>
    <property type="match status" value="1"/>
</dbReference>
<dbReference type="PROSITE" id="PS00301">
    <property type="entry name" value="G_TR_1"/>
    <property type="match status" value="1"/>
</dbReference>
<dbReference type="PROSITE" id="PS51722">
    <property type="entry name" value="G_TR_2"/>
    <property type="match status" value="1"/>
</dbReference>
<feature type="chain" id="PRO_1000091701" description="Elongation factor G">
    <location>
        <begin position="1"/>
        <end position="688"/>
    </location>
</feature>
<feature type="domain" description="tr-type G">
    <location>
        <begin position="8"/>
        <end position="282"/>
    </location>
</feature>
<feature type="binding site" evidence="1">
    <location>
        <begin position="17"/>
        <end position="24"/>
    </location>
    <ligand>
        <name>GTP</name>
        <dbReference type="ChEBI" id="CHEBI:37565"/>
    </ligand>
</feature>
<feature type="binding site" evidence="1">
    <location>
        <begin position="81"/>
        <end position="85"/>
    </location>
    <ligand>
        <name>GTP</name>
        <dbReference type="ChEBI" id="CHEBI:37565"/>
    </ligand>
</feature>
<feature type="binding site" evidence="1">
    <location>
        <begin position="135"/>
        <end position="138"/>
    </location>
    <ligand>
        <name>GTP</name>
        <dbReference type="ChEBI" id="CHEBI:37565"/>
    </ligand>
</feature>